<feature type="chain" id="PRO_0000342970" description="Probable calcium-binding protein CML47">
    <location>
        <begin position="1"/>
        <end position="183"/>
    </location>
</feature>
<feature type="domain" description="EF-hand 1" evidence="2">
    <location>
        <begin position="112"/>
        <end position="147"/>
    </location>
</feature>
<feature type="domain" description="EF-hand 2" evidence="2">
    <location>
        <begin position="149"/>
        <end position="183"/>
    </location>
</feature>
<feature type="binding site" evidence="2">
    <location>
        <position position="125"/>
    </location>
    <ligand>
        <name>Ca(2+)</name>
        <dbReference type="ChEBI" id="CHEBI:29108"/>
        <label>1</label>
    </ligand>
</feature>
<feature type="binding site" evidence="2">
    <location>
        <position position="127"/>
    </location>
    <ligand>
        <name>Ca(2+)</name>
        <dbReference type="ChEBI" id="CHEBI:29108"/>
        <label>1</label>
    </ligand>
</feature>
<feature type="binding site" evidence="2">
    <location>
        <position position="129"/>
    </location>
    <ligand>
        <name>Ca(2+)</name>
        <dbReference type="ChEBI" id="CHEBI:29108"/>
        <label>1</label>
    </ligand>
</feature>
<feature type="binding site" evidence="2">
    <location>
        <position position="136"/>
    </location>
    <ligand>
        <name>Ca(2+)</name>
        <dbReference type="ChEBI" id="CHEBI:29108"/>
        <label>1</label>
    </ligand>
</feature>
<feature type="binding site" evidence="2">
    <location>
        <position position="162"/>
    </location>
    <ligand>
        <name>Ca(2+)</name>
        <dbReference type="ChEBI" id="CHEBI:29108"/>
        <label>2</label>
    </ligand>
</feature>
<feature type="binding site" evidence="2">
    <location>
        <position position="164"/>
    </location>
    <ligand>
        <name>Ca(2+)</name>
        <dbReference type="ChEBI" id="CHEBI:29108"/>
        <label>2</label>
    </ligand>
</feature>
<feature type="binding site" evidence="2">
    <location>
        <position position="166"/>
    </location>
    <ligand>
        <name>Ca(2+)</name>
        <dbReference type="ChEBI" id="CHEBI:29108"/>
        <label>2</label>
    </ligand>
</feature>
<feature type="binding site" evidence="2">
    <location>
        <position position="168"/>
    </location>
    <ligand>
        <name>Ca(2+)</name>
        <dbReference type="ChEBI" id="CHEBI:29108"/>
        <label>2</label>
    </ligand>
</feature>
<feature type="binding site" evidence="2">
    <location>
        <position position="173"/>
    </location>
    <ligand>
        <name>Ca(2+)</name>
        <dbReference type="ChEBI" id="CHEBI:29108"/>
        <label>2</label>
    </ligand>
</feature>
<sequence>MEDSSLLSPISLLTIVIFLFILNLMMIIQDFSSSFPFRFHLFFSNAYILFTSIRNNKQNTELPIIKKVVVPNRADIKTSVEEVKAIIDDSEALYECLIEEGEEYLLEKNEMMGKEIVKEAFRLFDENQDGFIDENELKHVLSLLGYDECTKMECRKMVKVYDENRDGKIDFYEFVKLIEKSFS</sequence>
<proteinExistence type="evidence at transcript level"/>
<protein>
    <recommendedName>
        <fullName>Probable calcium-binding protein CML47</fullName>
    </recommendedName>
    <alternativeName>
        <fullName>Calmodulin-like protein 47</fullName>
    </alternativeName>
</protein>
<keyword id="KW-0106">Calcium</keyword>
<keyword id="KW-0479">Metal-binding</keyword>
<keyword id="KW-1185">Reference proteome</keyword>
<keyword id="KW-0677">Repeat</keyword>
<gene>
    <name type="primary">CML47</name>
    <name type="ordered locus">At3g47480</name>
    <name type="ORF">F1P2.30</name>
</gene>
<reference key="1">
    <citation type="journal article" date="2000" name="Nature">
        <title>Sequence and analysis of chromosome 3 of the plant Arabidopsis thaliana.</title>
        <authorList>
            <person name="Salanoubat M."/>
            <person name="Lemcke K."/>
            <person name="Rieger M."/>
            <person name="Ansorge W."/>
            <person name="Unseld M."/>
            <person name="Fartmann B."/>
            <person name="Valle G."/>
            <person name="Bloecker H."/>
            <person name="Perez-Alonso M."/>
            <person name="Obermaier B."/>
            <person name="Delseny M."/>
            <person name="Boutry M."/>
            <person name="Grivell L.A."/>
            <person name="Mache R."/>
            <person name="Puigdomenech P."/>
            <person name="De Simone V."/>
            <person name="Choisne N."/>
            <person name="Artiguenave F."/>
            <person name="Robert C."/>
            <person name="Brottier P."/>
            <person name="Wincker P."/>
            <person name="Cattolico L."/>
            <person name="Weissenbach J."/>
            <person name="Saurin W."/>
            <person name="Quetier F."/>
            <person name="Schaefer M."/>
            <person name="Mueller-Auer S."/>
            <person name="Gabel C."/>
            <person name="Fuchs M."/>
            <person name="Benes V."/>
            <person name="Wurmbach E."/>
            <person name="Drzonek H."/>
            <person name="Erfle H."/>
            <person name="Jordan N."/>
            <person name="Bangert S."/>
            <person name="Wiedelmann R."/>
            <person name="Kranz H."/>
            <person name="Voss H."/>
            <person name="Holland R."/>
            <person name="Brandt P."/>
            <person name="Nyakatura G."/>
            <person name="Vezzi A."/>
            <person name="D'Angelo M."/>
            <person name="Pallavicini A."/>
            <person name="Toppo S."/>
            <person name="Simionati B."/>
            <person name="Conrad A."/>
            <person name="Hornischer K."/>
            <person name="Kauer G."/>
            <person name="Loehnert T.-H."/>
            <person name="Nordsiek G."/>
            <person name="Reichelt J."/>
            <person name="Scharfe M."/>
            <person name="Schoen O."/>
            <person name="Bargues M."/>
            <person name="Terol J."/>
            <person name="Climent J."/>
            <person name="Navarro P."/>
            <person name="Collado C."/>
            <person name="Perez-Perez A."/>
            <person name="Ottenwaelder B."/>
            <person name="Duchemin D."/>
            <person name="Cooke R."/>
            <person name="Laudie M."/>
            <person name="Berger-Llauro C."/>
            <person name="Purnelle B."/>
            <person name="Masuy D."/>
            <person name="de Haan M."/>
            <person name="Maarse A.C."/>
            <person name="Alcaraz J.-P."/>
            <person name="Cottet A."/>
            <person name="Casacuberta E."/>
            <person name="Monfort A."/>
            <person name="Argiriou A."/>
            <person name="Flores M."/>
            <person name="Liguori R."/>
            <person name="Vitale D."/>
            <person name="Mannhaupt G."/>
            <person name="Haase D."/>
            <person name="Schoof H."/>
            <person name="Rudd S."/>
            <person name="Zaccaria P."/>
            <person name="Mewes H.-W."/>
            <person name="Mayer K.F.X."/>
            <person name="Kaul S."/>
            <person name="Town C.D."/>
            <person name="Koo H.L."/>
            <person name="Tallon L.J."/>
            <person name="Jenkins J."/>
            <person name="Rooney T."/>
            <person name="Rizzo M."/>
            <person name="Walts A."/>
            <person name="Utterback T."/>
            <person name="Fujii C.Y."/>
            <person name="Shea T.P."/>
            <person name="Creasy T.H."/>
            <person name="Haas B."/>
            <person name="Maiti R."/>
            <person name="Wu D."/>
            <person name="Peterson J."/>
            <person name="Van Aken S."/>
            <person name="Pai G."/>
            <person name="Militscher J."/>
            <person name="Sellers P."/>
            <person name="Gill J.E."/>
            <person name="Feldblyum T.V."/>
            <person name="Preuss D."/>
            <person name="Lin X."/>
            <person name="Nierman W.C."/>
            <person name="Salzberg S.L."/>
            <person name="White O."/>
            <person name="Venter J.C."/>
            <person name="Fraser C.M."/>
            <person name="Kaneko T."/>
            <person name="Nakamura Y."/>
            <person name="Sato S."/>
            <person name="Kato T."/>
            <person name="Asamizu E."/>
            <person name="Sasamoto S."/>
            <person name="Kimura T."/>
            <person name="Idesawa K."/>
            <person name="Kawashima K."/>
            <person name="Kishida Y."/>
            <person name="Kiyokawa C."/>
            <person name="Kohara M."/>
            <person name="Matsumoto M."/>
            <person name="Matsuno A."/>
            <person name="Muraki A."/>
            <person name="Nakayama S."/>
            <person name="Nakazaki N."/>
            <person name="Shinpo S."/>
            <person name="Takeuchi C."/>
            <person name="Wada T."/>
            <person name="Watanabe A."/>
            <person name="Yamada M."/>
            <person name="Yasuda M."/>
            <person name="Tabata S."/>
        </authorList>
    </citation>
    <scope>NUCLEOTIDE SEQUENCE [LARGE SCALE GENOMIC DNA]</scope>
    <source>
        <strain>cv. Columbia</strain>
    </source>
</reference>
<reference key="2">
    <citation type="journal article" date="2017" name="Plant J.">
        <title>Araport11: a complete reannotation of the Arabidopsis thaliana reference genome.</title>
        <authorList>
            <person name="Cheng C.Y."/>
            <person name="Krishnakumar V."/>
            <person name="Chan A.P."/>
            <person name="Thibaud-Nissen F."/>
            <person name="Schobel S."/>
            <person name="Town C.D."/>
        </authorList>
    </citation>
    <scope>GENOME REANNOTATION</scope>
    <source>
        <strain>cv. Columbia</strain>
    </source>
</reference>
<reference key="3">
    <citation type="submission" date="2004-03" db="EMBL/GenBank/DDBJ databases">
        <title>Arabidopsis ORF clones.</title>
        <authorList>
            <person name="Kim C.J."/>
            <person name="Chen H."/>
            <person name="Cheuk R.F."/>
            <person name="Shinn P."/>
            <person name="Carninci P."/>
            <person name="Hayashizaki Y."/>
            <person name="Ishida J."/>
            <person name="Kamiya A."/>
            <person name="Kawai J."/>
            <person name="Narusaka M."/>
            <person name="Sakurai T."/>
            <person name="Satou M."/>
            <person name="Seki M."/>
            <person name="Shinozaki K."/>
            <person name="Ecker J.R."/>
        </authorList>
    </citation>
    <scope>NUCLEOTIDE SEQUENCE [LARGE SCALE MRNA]</scope>
    <source>
        <strain>cv. Columbia</strain>
    </source>
</reference>
<reference key="4">
    <citation type="journal article" date="2003" name="New Phytol.">
        <title>Calmodulins and related potential calcium sensors of Arabidopsis.</title>
        <authorList>
            <person name="McCormack E."/>
            <person name="Braam J."/>
        </authorList>
    </citation>
    <scope>GENE FAMILY</scope>
    <scope>NOMENCLATURE</scope>
</reference>
<organism>
    <name type="scientific">Arabidopsis thaliana</name>
    <name type="common">Mouse-ear cress</name>
    <dbReference type="NCBI Taxonomy" id="3702"/>
    <lineage>
        <taxon>Eukaryota</taxon>
        <taxon>Viridiplantae</taxon>
        <taxon>Streptophyta</taxon>
        <taxon>Embryophyta</taxon>
        <taxon>Tracheophyta</taxon>
        <taxon>Spermatophyta</taxon>
        <taxon>Magnoliopsida</taxon>
        <taxon>eudicotyledons</taxon>
        <taxon>Gunneridae</taxon>
        <taxon>Pentapetalae</taxon>
        <taxon>rosids</taxon>
        <taxon>malvids</taxon>
        <taxon>Brassicales</taxon>
        <taxon>Brassicaceae</taxon>
        <taxon>Camelineae</taxon>
        <taxon>Arabidopsis</taxon>
    </lineage>
</organism>
<accession>Q9SN89</accession>
<evidence type="ECO:0000250" key="1"/>
<evidence type="ECO:0000255" key="2">
    <source>
        <dbReference type="PROSITE-ProRule" id="PRU00448"/>
    </source>
</evidence>
<evidence type="ECO:0000305" key="3"/>
<name>CML47_ARATH</name>
<dbReference type="EMBL" id="AL132955">
    <property type="protein sequence ID" value="CAB61974.1"/>
    <property type="molecule type" value="Genomic_DNA"/>
</dbReference>
<dbReference type="EMBL" id="CP002686">
    <property type="protein sequence ID" value="AEE78286.1"/>
    <property type="molecule type" value="Genomic_DNA"/>
</dbReference>
<dbReference type="EMBL" id="BT012166">
    <property type="protein sequence ID" value="AAS76261.1"/>
    <property type="molecule type" value="mRNA"/>
</dbReference>
<dbReference type="PIR" id="T45708">
    <property type="entry name" value="T45708"/>
</dbReference>
<dbReference type="RefSeq" id="NP_190332.1">
    <property type="nucleotide sequence ID" value="NM_114616.3"/>
</dbReference>
<dbReference type="SMR" id="Q9SN89"/>
<dbReference type="FunCoup" id="Q9SN89">
    <property type="interactions" value="203"/>
</dbReference>
<dbReference type="STRING" id="3702.Q9SN89"/>
<dbReference type="iPTMnet" id="Q9SN89"/>
<dbReference type="PaxDb" id="3702-AT3G47480.1"/>
<dbReference type="EnsemblPlants" id="AT3G47480.1">
    <property type="protein sequence ID" value="AT3G47480.1"/>
    <property type="gene ID" value="AT3G47480"/>
</dbReference>
<dbReference type="GeneID" id="823902"/>
<dbReference type="Gramene" id="AT3G47480.1">
    <property type="protein sequence ID" value="AT3G47480.1"/>
    <property type="gene ID" value="AT3G47480"/>
</dbReference>
<dbReference type="KEGG" id="ath:AT3G47480"/>
<dbReference type="Araport" id="AT3G47480"/>
<dbReference type="TAIR" id="AT3G47480">
    <property type="gene designation" value="CML47"/>
</dbReference>
<dbReference type="eggNOG" id="KOG0027">
    <property type="taxonomic scope" value="Eukaryota"/>
</dbReference>
<dbReference type="HOGENOM" id="CLU_1477111_0_0_1"/>
<dbReference type="InParanoid" id="Q9SN89"/>
<dbReference type="OMA" id="QKICRNG"/>
<dbReference type="PhylomeDB" id="Q9SN89"/>
<dbReference type="PRO" id="PR:Q9SN89"/>
<dbReference type="Proteomes" id="UP000006548">
    <property type="component" value="Chromosome 3"/>
</dbReference>
<dbReference type="ExpressionAtlas" id="Q9SN89">
    <property type="expression patterns" value="baseline and differential"/>
</dbReference>
<dbReference type="GO" id="GO:0005509">
    <property type="term" value="F:calcium ion binding"/>
    <property type="evidence" value="ECO:0007669"/>
    <property type="project" value="InterPro"/>
</dbReference>
<dbReference type="CDD" id="cd00051">
    <property type="entry name" value="EFh"/>
    <property type="match status" value="1"/>
</dbReference>
<dbReference type="FunFam" id="1.10.238.10:FF:000629">
    <property type="entry name" value="Parvalbumin beta 2"/>
    <property type="match status" value="1"/>
</dbReference>
<dbReference type="Gene3D" id="1.10.238.10">
    <property type="entry name" value="EF-hand"/>
    <property type="match status" value="1"/>
</dbReference>
<dbReference type="InterPro" id="IPR011992">
    <property type="entry name" value="EF-hand-dom_pair"/>
</dbReference>
<dbReference type="InterPro" id="IPR018247">
    <property type="entry name" value="EF_Hand_1_Ca_BS"/>
</dbReference>
<dbReference type="InterPro" id="IPR002048">
    <property type="entry name" value="EF_hand_dom"/>
</dbReference>
<dbReference type="InterPro" id="IPR039647">
    <property type="entry name" value="EF_hand_pair_protein_CML-like"/>
</dbReference>
<dbReference type="PANTHER" id="PTHR10891">
    <property type="entry name" value="EF-HAND CALCIUM-BINDING DOMAIN CONTAINING PROTEIN"/>
    <property type="match status" value="1"/>
</dbReference>
<dbReference type="Pfam" id="PF13499">
    <property type="entry name" value="EF-hand_7"/>
    <property type="match status" value="1"/>
</dbReference>
<dbReference type="SMART" id="SM00054">
    <property type="entry name" value="EFh"/>
    <property type="match status" value="2"/>
</dbReference>
<dbReference type="SUPFAM" id="SSF47473">
    <property type="entry name" value="EF-hand"/>
    <property type="match status" value="1"/>
</dbReference>
<dbReference type="PROSITE" id="PS00018">
    <property type="entry name" value="EF_HAND_1"/>
    <property type="match status" value="2"/>
</dbReference>
<dbReference type="PROSITE" id="PS50222">
    <property type="entry name" value="EF_HAND_2"/>
    <property type="match status" value="2"/>
</dbReference>
<comment type="function">
    <text evidence="1">Potential calcium sensor.</text>
</comment>
<comment type="caution">
    <text evidence="3">Although assigned as a calmodulin family member by Ref.4, it only contains EF-hand domains.</text>
</comment>